<gene>
    <name evidence="1" type="primary">hutU</name>
    <name type="ordered locus">STY0823</name>
    <name type="ordered locus">t2097</name>
</gene>
<protein>
    <recommendedName>
        <fullName evidence="1">Urocanate hydratase</fullName>
        <shortName evidence="1">Urocanase</shortName>
        <ecNumber evidence="1">4.2.1.49</ecNumber>
    </recommendedName>
    <alternativeName>
        <fullName evidence="1">Imidazolonepropionate hydrolase</fullName>
    </alternativeName>
</protein>
<name>HUTU_SALTI</name>
<dbReference type="EC" id="4.2.1.49" evidence="1"/>
<dbReference type="EMBL" id="AL513382">
    <property type="protein sequence ID" value="CAD05238.1"/>
    <property type="molecule type" value="Genomic_DNA"/>
</dbReference>
<dbReference type="EMBL" id="AE014613">
    <property type="protein sequence ID" value="AAO69714.1"/>
    <property type="molecule type" value="Genomic_DNA"/>
</dbReference>
<dbReference type="RefSeq" id="NP_455332.1">
    <property type="nucleotide sequence ID" value="NC_003198.1"/>
</dbReference>
<dbReference type="RefSeq" id="WP_001115205.1">
    <property type="nucleotide sequence ID" value="NZ_WSUR01000021.1"/>
</dbReference>
<dbReference type="SMR" id="Q8Z897"/>
<dbReference type="STRING" id="220341.gene:17584828"/>
<dbReference type="KEGG" id="stt:t2097"/>
<dbReference type="KEGG" id="sty:STY0823"/>
<dbReference type="PATRIC" id="fig|220341.7.peg.827"/>
<dbReference type="eggNOG" id="COG2987">
    <property type="taxonomic scope" value="Bacteria"/>
</dbReference>
<dbReference type="HOGENOM" id="CLU_018868_0_1_6"/>
<dbReference type="OMA" id="CQHYNGT"/>
<dbReference type="OrthoDB" id="9764874at2"/>
<dbReference type="BRENDA" id="4.2.1.49">
    <property type="organism ID" value="5557"/>
</dbReference>
<dbReference type="UniPathway" id="UPA00379">
    <property type="reaction ID" value="UER00550"/>
</dbReference>
<dbReference type="Proteomes" id="UP000000541">
    <property type="component" value="Chromosome"/>
</dbReference>
<dbReference type="Proteomes" id="UP000002670">
    <property type="component" value="Chromosome"/>
</dbReference>
<dbReference type="GO" id="GO:0005737">
    <property type="term" value="C:cytoplasm"/>
    <property type="evidence" value="ECO:0007669"/>
    <property type="project" value="UniProtKB-SubCell"/>
</dbReference>
<dbReference type="GO" id="GO:0016153">
    <property type="term" value="F:urocanate hydratase activity"/>
    <property type="evidence" value="ECO:0007669"/>
    <property type="project" value="UniProtKB-UniRule"/>
</dbReference>
<dbReference type="GO" id="GO:0019556">
    <property type="term" value="P:L-histidine catabolic process to glutamate and formamide"/>
    <property type="evidence" value="ECO:0007669"/>
    <property type="project" value="UniProtKB-UniPathway"/>
</dbReference>
<dbReference type="GO" id="GO:0019557">
    <property type="term" value="P:L-histidine catabolic process to glutamate and formate"/>
    <property type="evidence" value="ECO:0007669"/>
    <property type="project" value="UniProtKB-UniPathway"/>
</dbReference>
<dbReference type="FunFam" id="3.40.50.10730:FF:000001">
    <property type="entry name" value="Urocanate hydratase"/>
    <property type="match status" value="1"/>
</dbReference>
<dbReference type="Gene3D" id="3.40.50.10730">
    <property type="entry name" value="Urocanase like domains"/>
    <property type="match status" value="1"/>
</dbReference>
<dbReference type="Gene3D" id="3.40.1770.10">
    <property type="entry name" value="Urocanase superfamily"/>
    <property type="match status" value="1"/>
</dbReference>
<dbReference type="HAMAP" id="MF_00577">
    <property type="entry name" value="HutU"/>
    <property type="match status" value="1"/>
</dbReference>
<dbReference type="InterPro" id="IPR055351">
    <property type="entry name" value="Urocanase"/>
</dbReference>
<dbReference type="InterPro" id="IPR023637">
    <property type="entry name" value="Urocanase-like"/>
</dbReference>
<dbReference type="InterPro" id="IPR035401">
    <property type="entry name" value="Urocanase_C"/>
</dbReference>
<dbReference type="InterPro" id="IPR038364">
    <property type="entry name" value="Urocanase_central_sf"/>
</dbReference>
<dbReference type="InterPro" id="IPR023636">
    <property type="entry name" value="Urocanase_CS"/>
</dbReference>
<dbReference type="InterPro" id="IPR035400">
    <property type="entry name" value="Urocanase_N"/>
</dbReference>
<dbReference type="InterPro" id="IPR035085">
    <property type="entry name" value="Urocanase_Rossmann-like"/>
</dbReference>
<dbReference type="InterPro" id="IPR036190">
    <property type="entry name" value="Urocanase_sf"/>
</dbReference>
<dbReference type="NCBIfam" id="TIGR01228">
    <property type="entry name" value="hutU"/>
    <property type="match status" value="1"/>
</dbReference>
<dbReference type="NCBIfam" id="NF003820">
    <property type="entry name" value="PRK05414.1"/>
    <property type="match status" value="1"/>
</dbReference>
<dbReference type="PANTHER" id="PTHR12216">
    <property type="entry name" value="UROCANATE HYDRATASE"/>
    <property type="match status" value="1"/>
</dbReference>
<dbReference type="PANTHER" id="PTHR12216:SF4">
    <property type="entry name" value="UROCANATE HYDRATASE"/>
    <property type="match status" value="1"/>
</dbReference>
<dbReference type="Pfam" id="PF01175">
    <property type="entry name" value="Urocanase"/>
    <property type="match status" value="1"/>
</dbReference>
<dbReference type="Pfam" id="PF17392">
    <property type="entry name" value="Urocanase_C"/>
    <property type="match status" value="1"/>
</dbReference>
<dbReference type="Pfam" id="PF17391">
    <property type="entry name" value="Urocanase_N"/>
    <property type="match status" value="1"/>
</dbReference>
<dbReference type="PIRSF" id="PIRSF001423">
    <property type="entry name" value="Urocanate_hydrat"/>
    <property type="match status" value="1"/>
</dbReference>
<dbReference type="SUPFAM" id="SSF111326">
    <property type="entry name" value="Urocanase"/>
    <property type="match status" value="1"/>
</dbReference>
<dbReference type="PROSITE" id="PS01233">
    <property type="entry name" value="UROCANASE"/>
    <property type="match status" value="1"/>
</dbReference>
<evidence type="ECO:0000255" key="1">
    <source>
        <dbReference type="HAMAP-Rule" id="MF_00577"/>
    </source>
</evidence>
<sequence length="561" mass="61404">MPESKYRQQTIRAPRGTVLTAKSWLTEAPLRMLMNNLDPDVAENPHELVVYGGIGRAARNWECYDAIVDALTRLEADETLLIQSGKPVGVFKTHDNAPRVLIANSNLVPHWATWEHFNELDAKGLAMYGQMTAGSWIYIGSQGIVQGTYETFVEAGRQHYNGTLAGRWALTAGLGGMGGAQPLAATLAGACSLTIECQQSRIDFRLRTRYVDEQAATLDDALARITRYTREGKAVSVALCANAADILPELVNRGVRPDLVTDQTSAHDPLHGYLPSGWCWEEYQKNAQSDPRGTMQAAKRSMAAHVRAMLAFSKMGVPTFDYGNNIRQMAKEMGVENAFDFPGFVPAYIRPLFCRGIGPFRWVALSGDPQDIYKTDAKVKEIVAEDKHLHHWLDMARERIHFQGLPARICWVGLEWRQKLGLAFNEMVRCGEVSAPIVIGRDHLDSGSVASPNRETEAMRDGSDAVSDWPLLNALLNTASGATWVSLHHGGGVGMGFSQHAGMVIVCDGTDEAAARIRRVLHNDPATGVMRHADAGYDLAVECAVEQGLNLPMVAATQGKG</sequence>
<keyword id="KW-0963">Cytoplasm</keyword>
<keyword id="KW-0369">Histidine metabolism</keyword>
<keyword id="KW-0456">Lyase</keyword>
<keyword id="KW-0520">NAD</keyword>
<proteinExistence type="inferred from homology"/>
<feature type="chain" id="PRO_0000207351" description="Urocanate hydratase">
    <location>
        <begin position="1"/>
        <end position="561"/>
    </location>
</feature>
<feature type="active site" evidence="1">
    <location>
        <position position="410"/>
    </location>
</feature>
<feature type="binding site" evidence="1">
    <location>
        <begin position="52"/>
        <end position="53"/>
    </location>
    <ligand>
        <name>NAD(+)</name>
        <dbReference type="ChEBI" id="CHEBI:57540"/>
    </ligand>
</feature>
<feature type="binding site" evidence="1">
    <location>
        <position position="130"/>
    </location>
    <ligand>
        <name>NAD(+)</name>
        <dbReference type="ChEBI" id="CHEBI:57540"/>
    </ligand>
</feature>
<feature type="binding site" evidence="1">
    <location>
        <begin position="176"/>
        <end position="178"/>
    </location>
    <ligand>
        <name>NAD(+)</name>
        <dbReference type="ChEBI" id="CHEBI:57540"/>
    </ligand>
</feature>
<feature type="binding site" evidence="1">
    <location>
        <position position="196"/>
    </location>
    <ligand>
        <name>NAD(+)</name>
        <dbReference type="ChEBI" id="CHEBI:57540"/>
    </ligand>
</feature>
<feature type="binding site" evidence="1">
    <location>
        <position position="201"/>
    </location>
    <ligand>
        <name>NAD(+)</name>
        <dbReference type="ChEBI" id="CHEBI:57540"/>
    </ligand>
</feature>
<feature type="binding site" evidence="1">
    <location>
        <begin position="242"/>
        <end position="243"/>
    </location>
    <ligand>
        <name>NAD(+)</name>
        <dbReference type="ChEBI" id="CHEBI:57540"/>
    </ligand>
</feature>
<feature type="binding site" evidence="1">
    <location>
        <begin position="263"/>
        <end position="267"/>
    </location>
    <ligand>
        <name>NAD(+)</name>
        <dbReference type="ChEBI" id="CHEBI:57540"/>
    </ligand>
</feature>
<feature type="binding site" evidence="1">
    <location>
        <begin position="273"/>
        <end position="274"/>
    </location>
    <ligand>
        <name>NAD(+)</name>
        <dbReference type="ChEBI" id="CHEBI:57540"/>
    </ligand>
</feature>
<feature type="binding site" evidence="1">
    <location>
        <position position="322"/>
    </location>
    <ligand>
        <name>NAD(+)</name>
        <dbReference type="ChEBI" id="CHEBI:57540"/>
    </ligand>
</feature>
<feature type="binding site" evidence="1">
    <location>
        <position position="492"/>
    </location>
    <ligand>
        <name>NAD(+)</name>
        <dbReference type="ChEBI" id="CHEBI:57540"/>
    </ligand>
</feature>
<comment type="function">
    <text evidence="1">Catalyzes the conversion of urocanate to 4-imidazolone-5-propionate.</text>
</comment>
<comment type="catalytic activity">
    <reaction evidence="1">
        <text>4-imidazolone-5-propanoate = trans-urocanate + H2O</text>
        <dbReference type="Rhea" id="RHEA:13101"/>
        <dbReference type="ChEBI" id="CHEBI:15377"/>
        <dbReference type="ChEBI" id="CHEBI:17771"/>
        <dbReference type="ChEBI" id="CHEBI:77893"/>
        <dbReference type="EC" id="4.2.1.49"/>
    </reaction>
</comment>
<comment type="cofactor">
    <cofactor evidence="1">
        <name>NAD(+)</name>
        <dbReference type="ChEBI" id="CHEBI:57540"/>
    </cofactor>
    <text evidence="1">Binds 1 NAD(+) per subunit.</text>
</comment>
<comment type="pathway">
    <text evidence="1">Amino-acid degradation; L-histidine degradation into L-glutamate; N-formimidoyl-L-glutamate from L-histidine: step 2/3.</text>
</comment>
<comment type="subcellular location">
    <subcellularLocation>
        <location evidence="1">Cytoplasm</location>
    </subcellularLocation>
</comment>
<comment type="similarity">
    <text evidence="1">Belongs to the urocanase family.</text>
</comment>
<organism>
    <name type="scientific">Salmonella typhi</name>
    <dbReference type="NCBI Taxonomy" id="90370"/>
    <lineage>
        <taxon>Bacteria</taxon>
        <taxon>Pseudomonadati</taxon>
        <taxon>Pseudomonadota</taxon>
        <taxon>Gammaproteobacteria</taxon>
        <taxon>Enterobacterales</taxon>
        <taxon>Enterobacteriaceae</taxon>
        <taxon>Salmonella</taxon>
    </lineage>
</organism>
<accession>Q8Z897</accession>
<reference key="1">
    <citation type="journal article" date="2001" name="Nature">
        <title>Complete genome sequence of a multiple drug resistant Salmonella enterica serovar Typhi CT18.</title>
        <authorList>
            <person name="Parkhill J."/>
            <person name="Dougan G."/>
            <person name="James K.D."/>
            <person name="Thomson N.R."/>
            <person name="Pickard D."/>
            <person name="Wain J."/>
            <person name="Churcher C.M."/>
            <person name="Mungall K.L."/>
            <person name="Bentley S.D."/>
            <person name="Holden M.T.G."/>
            <person name="Sebaihia M."/>
            <person name="Baker S."/>
            <person name="Basham D."/>
            <person name="Brooks K."/>
            <person name="Chillingworth T."/>
            <person name="Connerton P."/>
            <person name="Cronin A."/>
            <person name="Davis P."/>
            <person name="Davies R.M."/>
            <person name="Dowd L."/>
            <person name="White N."/>
            <person name="Farrar J."/>
            <person name="Feltwell T."/>
            <person name="Hamlin N."/>
            <person name="Haque A."/>
            <person name="Hien T.T."/>
            <person name="Holroyd S."/>
            <person name="Jagels K."/>
            <person name="Krogh A."/>
            <person name="Larsen T.S."/>
            <person name="Leather S."/>
            <person name="Moule S."/>
            <person name="O'Gaora P."/>
            <person name="Parry C."/>
            <person name="Quail M.A."/>
            <person name="Rutherford K.M."/>
            <person name="Simmonds M."/>
            <person name="Skelton J."/>
            <person name="Stevens K."/>
            <person name="Whitehead S."/>
            <person name="Barrell B.G."/>
        </authorList>
    </citation>
    <scope>NUCLEOTIDE SEQUENCE [LARGE SCALE GENOMIC DNA]</scope>
    <source>
        <strain>CT18</strain>
    </source>
</reference>
<reference key="2">
    <citation type="journal article" date="2003" name="J. Bacteriol.">
        <title>Comparative genomics of Salmonella enterica serovar Typhi strains Ty2 and CT18.</title>
        <authorList>
            <person name="Deng W."/>
            <person name="Liou S.-R."/>
            <person name="Plunkett G. III"/>
            <person name="Mayhew G.F."/>
            <person name="Rose D.J."/>
            <person name="Burland V."/>
            <person name="Kodoyianni V."/>
            <person name="Schwartz D.C."/>
            <person name="Blattner F.R."/>
        </authorList>
    </citation>
    <scope>NUCLEOTIDE SEQUENCE [LARGE SCALE GENOMIC DNA]</scope>
    <source>
        <strain>ATCC 700931 / Ty2</strain>
    </source>
</reference>